<feature type="chain" id="PRO_0000278254" description="Sodium/bile acid cotransporter 7">
    <location>
        <begin position="1"/>
        <end position="336"/>
    </location>
</feature>
<feature type="topological domain" description="Cytoplasmic" evidence="1">
    <location>
        <begin position="1"/>
        <end position="10"/>
    </location>
</feature>
<feature type="transmembrane region" description="Helical" evidence="2">
    <location>
        <begin position="11"/>
        <end position="31"/>
    </location>
</feature>
<feature type="topological domain" description="Extracellular" evidence="1">
    <location>
        <begin position="32"/>
        <end position="37"/>
    </location>
</feature>
<feature type="transmembrane region" description="Helical" evidence="2">
    <location>
        <begin position="38"/>
        <end position="58"/>
    </location>
</feature>
<feature type="topological domain" description="Cytoplasmic" evidence="1">
    <location>
        <begin position="59"/>
        <end position="71"/>
    </location>
</feature>
<feature type="transmembrane region" description="Helical" evidence="2">
    <location>
        <begin position="72"/>
        <end position="92"/>
    </location>
</feature>
<feature type="topological domain" description="Extracellular" evidence="1">
    <location>
        <begin position="93"/>
        <end position="116"/>
    </location>
</feature>
<feature type="transmembrane region" description="Helical" evidence="2">
    <location>
        <begin position="117"/>
        <end position="137"/>
    </location>
</feature>
<feature type="topological domain" description="Cytoplasmic" evidence="1">
    <location>
        <position position="138"/>
    </location>
</feature>
<feature type="transmembrane region" description="Helical" evidence="2">
    <location>
        <begin position="139"/>
        <end position="159"/>
    </location>
</feature>
<feature type="topological domain" description="Extracellular" evidence="1">
    <location>
        <begin position="160"/>
        <end position="163"/>
    </location>
</feature>
<feature type="transmembrane region" description="Helical" evidence="2">
    <location>
        <begin position="164"/>
        <end position="184"/>
    </location>
</feature>
<feature type="topological domain" description="Cytoplasmic" evidence="1">
    <location>
        <begin position="185"/>
        <end position="201"/>
    </location>
</feature>
<feature type="transmembrane region" description="Helical" evidence="2">
    <location>
        <begin position="202"/>
        <end position="222"/>
    </location>
</feature>
<feature type="topological domain" description="Extracellular" evidence="1">
    <location>
        <begin position="223"/>
        <end position="233"/>
    </location>
</feature>
<feature type="transmembrane region" description="Helical" evidence="2">
    <location>
        <begin position="234"/>
        <end position="254"/>
    </location>
</feature>
<feature type="topological domain" description="Cytoplasmic" evidence="1">
    <location>
        <begin position="255"/>
        <end position="270"/>
    </location>
</feature>
<feature type="transmembrane region" description="Helical" evidence="2">
    <location>
        <begin position="271"/>
        <end position="291"/>
    </location>
</feature>
<feature type="topological domain" description="Extracellular" evidence="1">
    <location>
        <begin position="292"/>
        <end position="298"/>
    </location>
</feature>
<feature type="transmembrane region" description="Helical" evidence="2">
    <location>
        <begin position="299"/>
        <end position="319"/>
    </location>
</feature>
<feature type="topological domain" description="Cytoplasmic" evidence="1">
    <location>
        <begin position="320"/>
        <end position="336"/>
    </location>
</feature>
<comment type="function">
    <text evidence="1 3">Involved in teeth and skeletal development (PubMed:29878199). Has an essential role in the biosynthesis and trafficking of glycosaminoglycans and glycoproteins to produce a proper functioning extracellular matrix (By similarity). Required for extracellular matrix mineralization (PubMed:29878199). Also involved in the regulation of cellular calcium homeostasis (By similarity). Does not show transport activity towards bile acids or steroid sulfates.</text>
</comment>
<comment type="subcellular location">
    <subcellularLocation>
        <location evidence="1">Cell membrane</location>
        <topology evidence="1">Multi-pass membrane protein</topology>
    </subcellularLocation>
    <subcellularLocation>
        <location evidence="1">Endoplasmic reticulum membrane</location>
        <topology evidence="1">Multi-pass membrane protein</topology>
    </subcellularLocation>
    <subcellularLocation>
        <location evidence="1">Golgi apparatus membrane</location>
    </subcellularLocation>
</comment>
<comment type="disruption phenotype">
    <text evidence="3">Morphants have reduced head and eyes, a curled body, tooth cartilage that is bent downwards, reduced Meckel cartilage, absence of the fourth ceratobranchial cartilage, shortened or absent palate cartilage, widened palatal skeleton, reduced cleithrum, notochord, and lack of bone mineralization.</text>
</comment>
<comment type="similarity">
    <text evidence="4">Belongs to the bile acid:sodium symporter (BASS) (TC 2.A.28) family.</text>
</comment>
<sequence>MGLIARVRKEWFIIGIVLVITFAKLQPSVGVKGGPLHPEITITYVAVSVIFFNSGLSLKTEELASALMHVKLHFFVQTFTLVFFPIAIWLLLKVLALTAINEWLLRGLQTVACMPPPVSSAVILTKAVGGNEAAAIFNSAFGSFLGIVVTPLLLLVFLGSSSSVPFTSIFSQLFMTVVVPLIVGQVCRRFLRECLDRRKPPFGAVSSVVLLMIIYSTFCDTFNNPNIELDHLSLLTVVFIIFSIQLSFMALIFFLSTRKSSGFSAADSVAIMFCATHKSLTLGIPMLKIVFEGYEHLSLISVPLLIYHPAQILLGSVLLPSIKTWMSGRQKTLTPI</sequence>
<reference key="1">
    <citation type="submission" date="2004-07" db="EMBL/GenBank/DDBJ databases">
        <authorList>
            <consortium name="NIH - Zebrafish Gene Collection (ZGC) project"/>
        </authorList>
    </citation>
    <scope>NUCLEOTIDE SEQUENCE [LARGE SCALE MRNA]</scope>
</reference>
<reference key="2">
    <citation type="journal article" date="2018" name="Hum. Mol. Genet.">
        <title>Integrating glycomics and genomics uncovers SLC10A7 as essential factor for bone mineralization by regulating post-Golgi protein transport and glycosylation.</title>
        <authorList>
            <consortium name="CDG group"/>
            <person name="Ashikov A."/>
            <person name="Abu Bakar N."/>
            <person name="Wen X.Y."/>
            <person name="Niemeijer M."/>
            <person name="Rodrigues Pinto Osorio G."/>
            <person name="Brand-Arzamendi K."/>
            <person name="Hasadsri L."/>
            <person name="Hansikova H."/>
            <person name="Raymond K."/>
            <person name="Vicogne D."/>
            <person name="Ondruskova N."/>
            <person name="Simon M.E.H."/>
            <person name="Pfundt R."/>
            <person name="Timal S."/>
            <person name="Beumers R."/>
            <person name="Biot C."/>
            <person name="Smeets R."/>
            <person name="Kersten M."/>
            <person name="Huijben K."/>
            <person name="Linders P.T.A."/>
            <person name="van den Bogaart G."/>
            <person name="van Hijum S.A.F.T."/>
            <person name="Rodenburg R."/>
            <person name="van den Heuvel L.P."/>
            <person name="van Spronsen F."/>
            <person name="Honzik T."/>
            <person name="Foulquier F."/>
            <person name="van Scherpenzeel M."/>
            <person name="Lefeber D.J."/>
            <person name="Mirjam W."/>
            <person name="Han B."/>
            <person name="Helen M."/>
            <person name="Helen M."/>
            <person name="Peter V.H."/>
            <person name="Jiddeke V.K."/>
            <person name="Diego M."/>
            <person name="Lars M."/>
            <person name="Katja B.H."/>
            <person name="Jozef H."/>
            <person name="Majid A."/>
            <person name="Kevin C."/>
            <person name="Johann T.W.N."/>
        </authorList>
    </citation>
    <scope>FUNCTION</scope>
    <scope>DISRUPTION PHENOTYPE</scope>
</reference>
<proteinExistence type="evidence at transcript level"/>
<accession>Q6DHK8</accession>
<organism>
    <name type="scientific">Danio rerio</name>
    <name type="common">Zebrafish</name>
    <name type="synonym">Brachydanio rerio</name>
    <dbReference type="NCBI Taxonomy" id="7955"/>
    <lineage>
        <taxon>Eukaryota</taxon>
        <taxon>Metazoa</taxon>
        <taxon>Chordata</taxon>
        <taxon>Craniata</taxon>
        <taxon>Vertebrata</taxon>
        <taxon>Euteleostomi</taxon>
        <taxon>Actinopterygii</taxon>
        <taxon>Neopterygii</taxon>
        <taxon>Teleostei</taxon>
        <taxon>Ostariophysi</taxon>
        <taxon>Cypriniformes</taxon>
        <taxon>Danionidae</taxon>
        <taxon>Danioninae</taxon>
        <taxon>Danio</taxon>
    </lineage>
</organism>
<gene>
    <name type="primary">slc10a7</name>
    <name type="ORF">zgc:92251</name>
</gene>
<keyword id="KW-1003">Cell membrane</keyword>
<keyword id="KW-0256">Endoplasmic reticulum</keyword>
<keyword id="KW-0333">Golgi apparatus</keyword>
<keyword id="KW-0406">Ion transport</keyword>
<keyword id="KW-0472">Membrane</keyword>
<keyword id="KW-1185">Reference proteome</keyword>
<keyword id="KW-0915">Sodium</keyword>
<keyword id="KW-0739">Sodium transport</keyword>
<keyword id="KW-0769">Symport</keyword>
<keyword id="KW-0812">Transmembrane</keyword>
<keyword id="KW-1133">Transmembrane helix</keyword>
<keyword id="KW-0813">Transport</keyword>
<name>NTCP7_DANRE</name>
<protein>
    <recommendedName>
        <fullName>Sodium/bile acid cotransporter 7</fullName>
    </recommendedName>
    <alternativeName>
        <fullName>Na(+)/bile acid cotransporter 7</fullName>
    </alternativeName>
    <alternativeName>
        <fullName>Solute carrier family 10 member 7</fullName>
    </alternativeName>
</protein>
<evidence type="ECO:0000250" key="1">
    <source>
        <dbReference type="UniProtKB" id="Q0GE19"/>
    </source>
</evidence>
<evidence type="ECO:0000255" key="2"/>
<evidence type="ECO:0000269" key="3">
    <source>
    </source>
</evidence>
<evidence type="ECO:0000305" key="4"/>
<dbReference type="EMBL" id="BC075962">
    <property type="protein sequence ID" value="AAH75962.1"/>
    <property type="molecule type" value="mRNA"/>
</dbReference>
<dbReference type="RefSeq" id="NP_001003420.1">
    <property type="nucleotide sequence ID" value="NM_001003420.1"/>
</dbReference>
<dbReference type="SMR" id="Q6DHK8"/>
<dbReference type="FunCoup" id="Q6DHK8">
    <property type="interactions" value="163"/>
</dbReference>
<dbReference type="STRING" id="7955.ENSDARP00000131861"/>
<dbReference type="PaxDb" id="7955-ENSDARP00000012513"/>
<dbReference type="Ensembl" id="ENSDART00000168646">
    <property type="protein sequence ID" value="ENSDARP00000131861"/>
    <property type="gene ID" value="ENSDARG00000104508"/>
</dbReference>
<dbReference type="GeneID" id="445025"/>
<dbReference type="KEGG" id="dre:445025"/>
<dbReference type="AGR" id="ZFIN:ZDB-GENE-040801-5"/>
<dbReference type="CTD" id="84068"/>
<dbReference type="ZFIN" id="ZDB-GENE-040801-5">
    <property type="gene designation" value="slc10a7"/>
</dbReference>
<dbReference type="eggNOG" id="KOG4821">
    <property type="taxonomic scope" value="Eukaryota"/>
</dbReference>
<dbReference type="HOGENOM" id="CLU_039013_0_0_1"/>
<dbReference type="InParanoid" id="Q6DHK8"/>
<dbReference type="OMA" id="LPIMIYH"/>
<dbReference type="OrthoDB" id="188035at2759"/>
<dbReference type="PhylomeDB" id="Q6DHK8"/>
<dbReference type="TreeFam" id="TF329411"/>
<dbReference type="PRO" id="PR:Q6DHK8"/>
<dbReference type="Proteomes" id="UP000000437">
    <property type="component" value="Chromosome 23"/>
</dbReference>
<dbReference type="Bgee" id="ENSDARG00000104508">
    <property type="expression patterns" value="Expressed in blastula and 28 other cell types or tissues"/>
</dbReference>
<dbReference type="GO" id="GO:0005789">
    <property type="term" value="C:endoplasmic reticulum membrane"/>
    <property type="evidence" value="ECO:0007669"/>
    <property type="project" value="UniProtKB-SubCell"/>
</dbReference>
<dbReference type="GO" id="GO:0000139">
    <property type="term" value="C:Golgi membrane"/>
    <property type="evidence" value="ECO:0007669"/>
    <property type="project" value="UniProtKB-SubCell"/>
</dbReference>
<dbReference type="GO" id="GO:0005886">
    <property type="term" value="C:plasma membrane"/>
    <property type="evidence" value="ECO:0000318"/>
    <property type="project" value="GO_Central"/>
</dbReference>
<dbReference type="GO" id="GO:0015293">
    <property type="term" value="F:symporter activity"/>
    <property type="evidence" value="ECO:0007669"/>
    <property type="project" value="UniProtKB-KW"/>
</dbReference>
<dbReference type="GO" id="GO:0030282">
    <property type="term" value="P:bone mineralization"/>
    <property type="evidence" value="ECO:0000315"/>
    <property type="project" value="ZFIN"/>
</dbReference>
<dbReference type="GO" id="GO:0051216">
    <property type="term" value="P:cartilage development"/>
    <property type="evidence" value="ECO:0000315"/>
    <property type="project" value="ZFIN"/>
</dbReference>
<dbReference type="GO" id="GO:0006814">
    <property type="term" value="P:sodium ion transport"/>
    <property type="evidence" value="ECO:0007669"/>
    <property type="project" value="UniProtKB-KW"/>
</dbReference>
<dbReference type="FunFam" id="1.20.1530.20:FF:000008">
    <property type="entry name" value="Sodium/bile acid cotransporter"/>
    <property type="match status" value="1"/>
</dbReference>
<dbReference type="Gene3D" id="1.20.1530.20">
    <property type="match status" value="1"/>
</dbReference>
<dbReference type="InterPro" id="IPR038770">
    <property type="entry name" value="Na+/solute_symporter_sf"/>
</dbReference>
<dbReference type="InterPro" id="IPR016833">
    <property type="entry name" value="Put_Na-Bile_cotransptr"/>
</dbReference>
<dbReference type="PANTHER" id="PTHR18640:SF5">
    <property type="entry name" value="SODIUM_BILE ACID COTRANSPORTER 7"/>
    <property type="match status" value="1"/>
</dbReference>
<dbReference type="PANTHER" id="PTHR18640">
    <property type="entry name" value="SOLUTE CARRIER FAMILY 10 MEMBER 7"/>
    <property type="match status" value="1"/>
</dbReference>
<dbReference type="Pfam" id="PF13593">
    <property type="entry name" value="SBF_like"/>
    <property type="match status" value="1"/>
</dbReference>
<dbReference type="PIRSF" id="PIRSF026166">
    <property type="entry name" value="UCP026166"/>
    <property type="match status" value="1"/>
</dbReference>